<gene>
    <name evidence="1" type="primary">dtdA</name>
    <name type="ordered locus">Mbur_1941</name>
</gene>
<protein>
    <recommendedName>
        <fullName evidence="1">D-aminoacyl-tRNA deacylase</fullName>
        <ecNumber evidence="1">3.1.1.96</ecNumber>
    </recommendedName>
    <alternativeName>
        <fullName>D-tyrosyl-tRNA(Tyr) deacylase</fullName>
    </alternativeName>
</protein>
<accession>Q12UQ4</accession>
<organism>
    <name type="scientific">Methanococcoides burtonii (strain DSM 6242 / NBRC 107633 / OCM 468 / ACE-M)</name>
    <dbReference type="NCBI Taxonomy" id="259564"/>
    <lineage>
        <taxon>Archaea</taxon>
        <taxon>Methanobacteriati</taxon>
        <taxon>Methanobacteriota</taxon>
        <taxon>Stenosarchaea group</taxon>
        <taxon>Methanomicrobia</taxon>
        <taxon>Methanosarcinales</taxon>
        <taxon>Methanosarcinaceae</taxon>
        <taxon>Methanococcoides</taxon>
    </lineage>
</organism>
<evidence type="ECO:0000255" key="1">
    <source>
        <dbReference type="HAMAP-Rule" id="MF_00562"/>
    </source>
</evidence>
<proteinExistence type="inferred from homology"/>
<name>DTDA_METBU</name>
<sequence length="479" mass="53540">MTEDNEVQIAGMSIVIVCSVVDPASQNIKEHLLKLRDWVEMSVPGGIFDDLSAVYQSGNFYIIEVTEHHIYQDGIDRKIEEAGLDCDLLIFASKHKSADGRRLLTAHFTGNPGSADFGGYPGELSMAAPFALRCLLRNMAELSESIGFDVSMESTHHGPSDLDVPSVYAEIGSSEVEWVDQDAGDIVARSILSVRSGFCPVGIGFGGGHYAARQSELVLGSDISFGHNFPNYQLQFVDVDMFRKAVERSGADLVYCDRKAMSSDEKKRINELADEFGLDVLRESDIKGMEGVCWDIFRIFWHKVRDEGLSGRVKVPVGLKDKLSENVCDIFDFDVSNVVTVVIDNELLKLVRSVDAGGVKRLLDMSNVVYSERDDATISNHFYTFWNRDAEDFLTFIVDECIKILKGRYDTEYVFEENVLYISDERFSPELARKWGVPSGPMFGELAKGQSVMIEGNTVLPEMVHERTQKSLVLRNVIF</sequence>
<reference key="1">
    <citation type="journal article" date="2009" name="ISME J.">
        <title>The genome sequence of the psychrophilic archaeon, Methanococcoides burtonii: the role of genome evolution in cold adaptation.</title>
        <authorList>
            <person name="Allen M.A."/>
            <person name="Lauro F.M."/>
            <person name="Williams T.J."/>
            <person name="Burg D."/>
            <person name="Siddiqui K.S."/>
            <person name="De Francisci D."/>
            <person name="Chong K.W."/>
            <person name="Pilak O."/>
            <person name="Chew H.H."/>
            <person name="De Maere M.Z."/>
            <person name="Ting L."/>
            <person name="Katrib M."/>
            <person name="Ng C."/>
            <person name="Sowers K.R."/>
            <person name="Galperin M.Y."/>
            <person name="Anderson I.J."/>
            <person name="Ivanova N."/>
            <person name="Dalin E."/>
            <person name="Martinez M."/>
            <person name="Lapidus A."/>
            <person name="Hauser L."/>
            <person name="Land M."/>
            <person name="Thomas T."/>
            <person name="Cavicchioli R."/>
        </authorList>
    </citation>
    <scope>NUCLEOTIDE SEQUENCE [LARGE SCALE GENOMIC DNA]</scope>
    <source>
        <strain>DSM 6242 / NBRC 107633 / OCM 468 / ACE-M</strain>
    </source>
</reference>
<keyword id="KW-0378">Hydrolase</keyword>
<keyword id="KW-0479">Metal-binding</keyword>
<keyword id="KW-0862">Zinc</keyword>
<feature type="chain" id="PRO_0000345215" description="D-aminoacyl-tRNA deacylase">
    <location>
        <begin position="1"/>
        <end position="479"/>
    </location>
</feature>
<comment type="function">
    <text evidence="1">D-aminoacyl-tRNA deacylase with broad substrate specificity. By recycling D-aminoacyl-tRNA to D-amino acids and free tRNA molecules, this enzyme counteracts the toxicity associated with the formation of D-aminoacyl-tRNA entities in vivo.</text>
</comment>
<comment type="catalytic activity">
    <reaction evidence="1">
        <text>a D-aminoacyl-tRNA + H2O = a tRNA + a D-alpha-amino acid + H(+)</text>
        <dbReference type="Rhea" id="RHEA:13953"/>
        <dbReference type="Rhea" id="RHEA-COMP:10123"/>
        <dbReference type="Rhea" id="RHEA-COMP:10124"/>
        <dbReference type="ChEBI" id="CHEBI:15377"/>
        <dbReference type="ChEBI" id="CHEBI:15378"/>
        <dbReference type="ChEBI" id="CHEBI:59871"/>
        <dbReference type="ChEBI" id="CHEBI:78442"/>
        <dbReference type="ChEBI" id="CHEBI:79333"/>
        <dbReference type="EC" id="3.1.1.96"/>
    </reaction>
</comment>
<comment type="catalytic activity">
    <reaction evidence="1">
        <text>glycyl-tRNA(Ala) + H2O = tRNA(Ala) + glycine + H(+)</text>
        <dbReference type="Rhea" id="RHEA:53744"/>
        <dbReference type="Rhea" id="RHEA-COMP:9657"/>
        <dbReference type="Rhea" id="RHEA-COMP:13640"/>
        <dbReference type="ChEBI" id="CHEBI:15377"/>
        <dbReference type="ChEBI" id="CHEBI:15378"/>
        <dbReference type="ChEBI" id="CHEBI:57305"/>
        <dbReference type="ChEBI" id="CHEBI:78442"/>
        <dbReference type="ChEBI" id="CHEBI:78522"/>
        <dbReference type="EC" id="3.1.1.96"/>
    </reaction>
</comment>
<comment type="cofactor">
    <cofactor evidence="1">
        <name>Zn(2+)</name>
        <dbReference type="ChEBI" id="CHEBI:29105"/>
    </cofactor>
    <text evidence="1">Binds 2 Zn(2+) ions per subunit.</text>
</comment>
<comment type="subunit">
    <text evidence="1">Monomer.</text>
</comment>
<comment type="similarity">
    <text evidence="1">Belongs to the DtdA deacylase family.</text>
</comment>
<dbReference type="EC" id="3.1.1.96" evidence="1"/>
<dbReference type="EMBL" id="CP000300">
    <property type="protein sequence ID" value="ABE52822.1"/>
    <property type="molecule type" value="Genomic_DNA"/>
</dbReference>
<dbReference type="RefSeq" id="WP_011499964.1">
    <property type="nucleotide sequence ID" value="NC_007955.1"/>
</dbReference>
<dbReference type="SMR" id="Q12UQ4"/>
<dbReference type="STRING" id="259564.Mbur_1941"/>
<dbReference type="GeneID" id="25393183"/>
<dbReference type="KEGG" id="mbu:Mbur_1941"/>
<dbReference type="HOGENOM" id="CLU_610619_0_0_2"/>
<dbReference type="OrthoDB" id="9863at2157"/>
<dbReference type="Proteomes" id="UP000001979">
    <property type="component" value="Chromosome"/>
</dbReference>
<dbReference type="GO" id="GO:0051499">
    <property type="term" value="F:D-aminoacyl-tRNA deacylase activity"/>
    <property type="evidence" value="ECO:0007669"/>
    <property type="project" value="UniProtKB-UniRule"/>
</dbReference>
<dbReference type="GO" id="GO:0008270">
    <property type="term" value="F:zinc ion binding"/>
    <property type="evidence" value="ECO:0007669"/>
    <property type="project" value="UniProtKB-UniRule"/>
</dbReference>
<dbReference type="GO" id="GO:0019478">
    <property type="term" value="P:D-amino acid catabolic process"/>
    <property type="evidence" value="ECO:0007669"/>
    <property type="project" value="UniProtKB-UniRule"/>
</dbReference>
<dbReference type="Gene3D" id="3.40.50.10700">
    <property type="entry name" value="AF0625-like"/>
    <property type="match status" value="1"/>
</dbReference>
<dbReference type="Gene3D" id="3.40.630.50">
    <property type="entry name" value="AF0625-like"/>
    <property type="match status" value="1"/>
</dbReference>
<dbReference type="HAMAP" id="MF_00562">
    <property type="entry name" value="Deacylase_DtdA"/>
    <property type="match status" value="1"/>
</dbReference>
<dbReference type="InterPro" id="IPR018033">
    <property type="entry name" value="Deacylase_DtdA_archaea"/>
</dbReference>
<dbReference type="InterPro" id="IPR007508">
    <property type="entry name" value="DtdA"/>
</dbReference>
<dbReference type="PANTHER" id="PTHR34667">
    <property type="entry name" value="D-AMINOACYL-TRNA DEACYLASE"/>
    <property type="match status" value="1"/>
</dbReference>
<dbReference type="PANTHER" id="PTHR34667:SF1">
    <property type="entry name" value="D-AMINOACYL-TRNA DEACYLASE"/>
    <property type="match status" value="1"/>
</dbReference>
<dbReference type="Pfam" id="PF04414">
    <property type="entry name" value="tRNA_deacylase"/>
    <property type="match status" value="1"/>
</dbReference>
<dbReference type="SUPFAM" id="SSF142535">
    <property type="entry name" value="AF0625-like"/>
    <property type="match status" value="1"/>
</dbReference>